<dbReference type="EC" id="1.-.-.-" evidence="3"/>
<dbReference type="EMBL" id="MH431572">
    <property type="protein sequence ID" value="AXL48364.1"/>
    <property type="molecule type" value="mRNA"/>
</dbReference>
<dbReference type="SMR" id="A0A346B546"/>
<dbReference type="UniPathway" id="UPA00213"/>
<dbReference type="GO" id="GO:0016020">
    <property type="term" value="C:membrane"/>
    <property type="evidence" value="ECO:0007669"/>
    <property type="project" value="UniProtKB-SubCell"/>
</dbReference>
<dbReference type="GO" id="GO:0020037">
    <property type="term" value="F:heme binding"/>
    <property type="evidence" value="ECO:0007669"/>
    <property type="project" value="InterPro"/>
</dbReference>
<dbReference type="GO" id="GO:0005506">
    <property type="term" value="F:iron ion binding"/>
    <property type="evidence" value="ECO:0007669"/>
    <property type="project" value="InterPro"/>
</dbReference>
<dbReference type="GO" id="GO:0004497">
    <property type="term" value="F:monooxygenase activity"/>
    <property type="evidence" value="ECO:0007669"/>
    <property type="project" value="UniProtKB-KW"/>
</dbReference>
<dbReference type="GO" id="GO:0016705">
    <property type="term" value="F:oxidoreductase activity, acting on paired donors, with incorporation or reduction of molecular oxygen"/>
    <property type="evidence" value="ECO:0007669"/>
    <property type="project" value="InterPro"/>
</dbReference>
<dbReference type="GO" id="GO:0019748">
    <property type="term" value="P:secondary metabolic process"/>
    <property type="evidence" value="ECO:0007669"/>
    <property type="project" value="UniProtKB-ARBA"/>
</dbReference>
<dbReference type="GO" id="GO:0016114">
    <property type="term" value="P:terpenoid biosynthetic process"/>
    <property type="evidence" value="ECO:0007669"/>
    <property type="project" value="UniProtKB-UniPathway"/>
</dbReference>
<dbReference type="CDD" id="cd11041">
    <property type="entry name" value="CYP503A1-like"/>
    <property type="match status" value="1"/>
</dbReference>
<dbReference type="Gene3D" id="1.10.630.10">
    <property type="entry name" value="Cytochrome P450"/>
    <property type="match status" value="1"/>
</dbReference>
<dbReference type="InterPro" id="IPR001128">
    <property type="entry name" value="Cyt_P450"/>
</dbReference>
<dbReference type="InterPro" id="IPR017972">
    <property type="entry name" value="Cyt_P450_CS"/>
</dbReference>
<dbReference type="InterPro" id="IPR002403">
    <property type="entry name" value="Cyt_P450_E_grp-IV"/>
</dbReference>
<dbReference type="InterPro" id="IPR036396">
    <property type="entry name" value="Cyt_P450_sf"/>
</dbReference>
<dbReference type="PANTHER" id="PTHR46206">
    <property type="entry name" value="CYTOCHROME P450"/>
    <property type="match status" value="1"/>
</dbReference>
<dbReference type="Pfam" id="PF00067">
    <property type="entry name" value="p450"/>
    <property type="match status" value="1"/>
</dbReference>
<dbReference type="PRINTS" id="PR00465">
    <property type="entry name" value="EP450IV"/>
</dbReference>
<dbReference type="SUPFAM" id="SSF48264">
    <property type="entry name" value="Cytochrome P450"/>
    <property type="match status" value="1"/>
</dbReference>
<dbReference type="PROSITE" id="PS00086">
    <property type="entry name" value="CYTOCHROME_P450"/>
    <property type="match status" value="1"/>
</dbReference>
<accession>A0A346B546</accession>
<comment type="function">
    <text evidence="3">Cytochrome P450 monooxygenase that hydroxylates the ganoderic acids DM and TR at the C-23 position to produce hainanic acid A and ganoderic acid Jc, respectively.</text>
</comment>
<comment type="catalytic activity">
    <reaction evidence="3">
        <text>ganoderate DM + reduced [NADPH--hemoprotein reductase] + O2 = hainanate A + oxidized [NADPH--hemoprotein reductase] + H2O + H(+)</text>
        <dbReference type="Rhea" id="RHEA:68732"/>
        <dbReference type="Rhea" id="RHEA-COMP:11964"/>
        <dbReference type="Rhea" id="RHEA-COMP:11965"/>
        <dbReference type="ChEBI" id="CHEBI:15377"/>
        <dbReference type="ChEBI" id="CHEBI:15378"/>
        <dbReference type="ChEBI" id="CHEBI:15379"/>
        <dbReference type="ChEBI" id="CHEBI:57618"/>
        <dbReference type="ChEBI" id="CHEBI:58210"/>
        <dbReference type="ChEBI" id="CHEBI:178026"/>
        <dbReference type="ChEBI" id="CHEBI:178027"/>
    </reaction>
    <physiologicalReaction direction="left-to-right" evidence="3">
        <dbReference type="Rhea" id="RHEA:68733"/>
    </physiologicalReaction>
</comment>
<comment type="catalytic activity">
    <reaction evidence="3">
        <text>ganoderate TR + reduced [NADPH--hemoprotein reductase] + O2 = ganoderate Jc + oxidized [NADPH--hemoprotein reductase] + H2O + H(+)</text>
        <dbReference type="Rhea" id="RHEA:68736"/>
        <dbReference type="Rhea" id="RHEA-COMP:11964"/>
        <dbReference type="Rhea" id="RHEA-COMP:11965"/>
        <dbReference type="ChEBI" id="CHEBI:15377"/>
        <dbReference type="ChEBI" id="CHEBI:15378"/>
        <dbReference type="ChEBI" id="CHEBI:15379"/>
        <dbReference type="ChEBI" id="CHEBI:57618"/>
        <dbReference type="ChEBI" id="CHEBI:58210"/>
        <dbReference type="ChEBI" id="CHEBI:178028"/>
        <dbReference type="ChEBI" id="CHEBI:178029"/>
    </reaction>
    <physiologicalReaction direction="left-to-right" evidence="3">
        <dbReference type="Rhea" id="RHEA:68737"/>
    </physiologicalReaction>
</comment>
<comment type="cofactor">
    <cofactor evidence="1">
        <name>heme</name>
        <dbReference type="ChEBI" id="CHEBI:30413"/>
    </cofactor>
</comment>
<comment type="pathway">
    <text evidence="3">Secondary metabolite biosynthesis; terpenoid biosynthesis.</text>
</comment>
<comment type="subcellular location">
    <subcellularLocation>
        <location evidence="2">Membrane</location>
        <topology evidence="2">Single-pass membrane protein</topology>
    </subcellularLocation>
</comment>
<comment type="similarity">
    <text evidence="5">Belongs to the cytochrome P450 family.</text>
</comment>
<reference key="1">
    <citation type="journal article" date="2018" name="Phytochemistry">
        <title>Metabolism of ganoderic acids by a Ganoderma lucidum cytochrome P450 and the 3-keto sterol reductase ERG27 from yeast.</title>
        <authorList>
            <person name="Yang C."/>
            <person name="Li W."/>
            <person name="Li C."/>
            <person name="Zhou Z."/>
            <person name="Xiao Y."/>
            <person name="Yan X."/>
        </authorList>
    </citation>
    <scope>NUCLEOTIDE SEQUENCE [MRNA]</scope>
    <scope>FUNCTION</scope>
    <scope>CATALYTIC ACTIVITY</scope>
    <scope>PATHWAY</scope>
</reference>
<protein>
    <recommendedName>
        <fullName evidence="4">Cytochrome P450 monooxygenase CYP512U6</fullName>
        <ecNumber evidence="3">1.-.-.-</ecNumber>
    </recommendedName>
</protein>
<keyword id="KW-0349">Heme</keyword>
<keyword id="KW-0408">Iron</keyword>
<keyword id="KW-0472">Membrane</keyword>
<keyword id="KW-0479">Metal-binding</keyword>
<keyword id="KW-0503">Monooxygenase</keyword>
<keyword id="KW-0560">Oxidoreductase</keyword>
<keyword id="KW-0812">Transmembrane</keyword>
<keyword id="KW-1133">Transmembrane helix</keyword>
<name>CYPU6_GANLU</name>
<sequence>MLALMDDIQSAVFACVAVVIAIYAVRWYTDPINSIPTVGGSSLPGLSLLTAWRTVHNCREVLTAGYRKYPDSVFKIAMFDSWLVIASGRNMIEEVRKRHDELSTTLGIQEALRSRYIRDRQVMTDEYHVRVVKEKMSGRTLQAMLPDVIEEVSIAVKDHIATQGSGWTSLEVVPAMQKVIFQVNNRAFVGPVLCRSKEYLNVAIDFSEHTFKWSAILSVTPEFVRRIIAPFINEAKNDTRRAVPLLRPIIEERMKAQADLGEGWHDKPNDILQFVLDKAIPKEESMFLIVHRLLIVNHAASGNSVNAITYVLYHLAENPDILQACREEAEAKIAADGWTSTALANMWRLDSILRETLRYHGTALVSMNRLATKDVVLSDGTRLPKGTFMQAAAYPLHRDGALVENAHTFDPFRYARMRDADGEGLKHQASTTSPEYIPFGHGQHACPGRYFAAYVLKAILAHLIVNYDLKLGGDGSRPPIRYVLSAVLPPPGGCVLLKERGEGSTTTTG</sequence>
<feature type="chain" id="PRO_0000454389" description="Cytochrome P450 monooxygenase CYP512U6">
    <location>
        <begin position="1"/>
        <end position="509"/>
    </location>
</feature>
<feature type="transmembrane region" description="Helical" evidence="2">
    <location>
        <begin position="12"/>
        <end position="29"/>
    </location>
</feature>
<feature type="binding site" description="axial binding residue" evidence="1">
    <location>
        <position position="446"/>
    </location>
    <ligand>
        <name>heme</name>
        <dbReference type="ChEBI" id="CHEBI:30413"/>
    </ligand>
    <ligandPart>
        <name>Fe</name>
        <dbReference type="ChEBI" id="CHEBI:18248"/>
    </ligandPart>
</feature>
<organism>
    <name type="scientific">Ganoderma lucidum</name>
    <name type="common">Ling zhi medicinal fungus</name>
    <name type="synonym">Bracket fungus</name>
    <dbReference type="NCBI Taxonomy" id="5315"/>
    <lineage>
        <taxon>Eukaryota</taxon>
        <taxon>Fungi</taxon>
        <taxon>Dikarya</taxon>
        <taxon>Basidiomycota</taxon>
        <taxon>Agaricomycotina</taxon>
        <taxon>Agaricomycetes</taxon>
        <taxon>Polyporales</taxon>
        <taxon>Polyporaceae</taxon>
        <taxon>Ganoderma</taxon>
    </lineage>
</organism>
<proteinExistence type="evidence at protein level"/>
<gene>
    <name evidence="4" type="primary">CYP512U6</name>
</gene>
<evidence type="ECO:0000250" key="1">
    <source>
        <dbReference type="UniProtKB" id="P04798"/>
    </source>
</evidence>
<evidence type="ECO:0000255" key="2"/>
<evidence type="ECO:0000269" key="3">
    <source>
    </source>
</evidence>
<evidence type="ECO:0000303" key="4">
    <source>
    </source>
</evidence>
<evidence type="ECO:0000305" key="5"/>